<keyword id="KW-0131">Cell cycle</keyword>
<keyword id="KW-0132">Cell division</keyword>
<keyword id="KW-0137">Centromere</keyword>
<keyword id="KW-0158">Chromosome</keyword>
<keyword id="KW-0159">Chromosome partition</keyword>
<keyword id="KW-0498">Mitosis</keyword>
<keyword id="KW-0539">Nucleus</keyword>
<keyword id="KW-0597">Phosphoprotein</keyword>
<keyword id="KW-1185">Reference proteome</keyword>
<feature type="chain" id="PRO_0000120187" description="Cohesin subunit SA-2">
    <location>
        <begin position="1"/>
        <end position="1194"/>
    </location>
</feature>
<feature type="domain" description="SCD" evidence="2">
    <location>
        <begin position="224"/>
        <end position="309"/>
    </location>
</feature>
<feature type="region of interest" description="Disordered" evidence="3">
    <location>
        <begin position="986"/>
        <end position="1027"/>
    </location>
</feature>
<feature type="compositionally biased region" description="Low complexity" evidence="3">
    <location>
        <begin position="988"/>
        <end position="1001"/>
    </location>
</feature>
<feature type="compositionally biased region" description="Basic residues" evidence="3">
    <location>
        <begin position="1002"/>
        <end position="1013"/>
    </location>
</feature>
<accession>Q9DGN0</accession>
<comment type="function">
    <text evidence="1">Component of cohesin complex, a complex required for the cohesion of sister chromatids after DNA replication. The cohesin complex apparently forms a large proteinaceous ring within which sister chromatids can be trapped. At anaphase, the complex is cleaved and dissociates from chromatin, allowing sister chromatids to segregate. The cohesin complex may also play a role in spindle pole assembly during mitosis.</text>
</comment>
<comment type="subunit">
    <text evidence="4">Part of the cohesin complex which is composed of a heterodimer between a SMC1 protein (SMC1A or SMC1B) and SMC3, which are attached via their hinge domain, and RAD21 which link them at their heads, and one STAG protein (STAG1, STAG2 or STAG3). In cohesin complexes, STAG2 is mutually exclusive with STAG1 and STAG3. Interacts directly with RAD21 in cohesin complex.</text>
</comment>
<comment type="interaction">
    <interactant intactId="EBI-80675">
        <id>Q9DGN0</id>
    </interactant>
    <interactant intactId="EBI-80653">
        <id>O93309</id>
        <label>smc3</label>
    </interactant>
    <organismsDiffer>false</organismsDiffer>
    <experiments>2</experiments>
</comment>
<comment type="subcellular location">
    <subcellularLocation>
        <location>Nucleus</location>
    </subcellularLocation>
    <subcellularLocation>
        <location>Chromosome</location>
    </subcellularLocation>
    <subcellularLocation>
        <location>Chromosome</location>
        <location>Centromere</location>
    </subcellularLocation>
    <text>Associates with chromatin. Before prophase it is scattered along chromosome arms. During prophase, most of cohesin complexes dissociate from chromatin probably because of phosphorylation by PLK1, except at centromeres, where cohesin complexes remain. At anaphase, the RAD21 subunit of cohesin is cleaved, leading to the dissociation of the complex from chromosomes, allowing chromosome separation.</text>
</comment>
<comment type="PTM">
    <text evidence="5">Phosphorylated by PLK1. The large dissociation of cohesin from chromosome arms during prophase is partly due to its phosphorylation.</text>
</comment>
<comment type="similarity">
    <text evidence="6">Belongs to the SCC3 family.</text>
</comment>
<gene>
    <name type="primary">stag2</name>
    <name type="synonym">sa2</name>
</gene>
<evidence type="ECO:0000250" key="1">
    <source>
        <dbReference type="UniProtKB" id="Q8N3U4"/>
    </source>
</evidence>
<evidence type="ECO:0000255" key="2">
    <source>
        <dbReference type="PROSITE-ProRule" id="PRU00750"/>
    </source>
</evidence>
<evidence type="ECO:0000256" key="3">
    <source>
        <dbReference type="SAM" id="MobiDB-lite"/>
    </source>
</evidence>
<evidence type="ECO:0000269" key="4">
    <source>
    </source>
</evidence>
<evidence type="ECO:0000269" key="5">
    <source>
    </source>
</evidence>
<evidence type="ECO:0000305" key="6"/>
<proteinExistence type="evidence at protein level"/>
<dbReference type="EMBL" id="AF255018">
    <property type="protein sequence ID" value="AAG00431.1"/>
    <property type="molecule type" value="mRNA"/>
</dbReference>
<dbReference type="RefSeq" id="NP_001080997.1">
    <property type="nucleotide sequence ID" value="NM_001087528.1"/>
</dbReference>
<dbReference type="SMR" id="Q9DGN0"/>
<dbReference type="BioGRID" id="98921">
    <property type="interactions" value="5"/>
</dbReference>
<dbReference type="IntAct" id="Q9DGN0">
    <property type="interactions" value="8"/>
</dbReference>
<dbReference type="GeneID" id="394319"/>
<dbReference type="KEGG" id="xla:394319"/>
<dbReference type="AGR" id="Xenbase:XB-GENE-17332484"/>
<dbReference type="CTD" id="394319"/>
<dbReference type="Xenbase" id="XB-GENE-17332484">
    <property type="gene designation" value="stag2.L"/>
</dbReference>
<dbReference type="OrthoDB" id="498590at2759"/>
<dbReference type="Proteomes" id="UP000186698">
    <property type="component" value="Chromosome 8L"/>
</dbReference>
<dbReference type="Bgee" id="394319">
    <property type="expression patterns" value="Expressed in gastrula and 19 other cell types or tissues"/>
</dbReference>
<dbReference type="GO" id="GO:0000785">
    <property type="term" value="C:chromatin"/>
    <property type="evidence" value="ECO:0000318"/>
    <property type="project" value="GO_Central"/>
</dbReference>
<dbReference type="GO" id="GO:0000775">
    <property type="term" value="C:chromosome, centromeric region"/>
    <property type="evidence" value="ECO:0007669"/>
    <property type="project" value="UniProtKB-SubCell"/>
</dbReference>
<dbReference type="GO" id="GO:0008278">
    <property type="term" value="C:cohesin complex"/>
    <property type="evidence" value="ECO:0000250"/>
    <property type="project" value="UniProtKB"/>
</dbReference>
<dbReference type="GO" id="GO:0005634">
    <property type="term" value="C:nucleus"/>
    <property type="evidence" value="ECO:0000318"/>
    <property type="project" value="GO_Central"/>
</dbReference>
<dbReference type="GO" id="GO:0003682">
    <property type="term" value="F:chromatin binding"/>
    <property type="evidence" value="ECO:0000318"/>
    <property type="project" value="GO_Central"/>
</dbReference>
<dbReference type="GO" id="GO:0051301">
    <property type="term" value="P:cell division"/>
    <property type="evidence" value="ECO:0007669"/>
    <property type="project" value="UniProtKB-KW"/>
</dbReference>
<dbReference type="GO" id="GO:0007059">
    <property type="term" value="P:chromosome segregation"/>
    <property type="evidence" value="ECO:0007669"/>
    <property type="project" value="UniProtKB-KW"/>
</dbReference>
<dbReference type="GO" id="GO:0007062">
    <property type="term" value="P:sister chromatid cohesion"/>
    <property type="evidence" value="ECO:0000250"/>
    <property type="project" value="UniProtKB"/>
</dbReference>
<dbReference type="InterPro" id="IPR016024">
    <property type="entry name" value="ARM-type_fold"/>
</dbReference>
<dbReference type="InterPro" id="IPR039662">
    <property type="entry name" value="Cohesin_Scc3/SA"/>
</dbReference>
<dbReference type="InterPro" id="IPR056396">
    <property type="entry name" value="HEAT_SCC3-SA"/>
</dbReference>
<dbReference type="InterPro" id="IPR020839">
    <property type="entry name" value="SCD"/>
</dbReference>
<dbReference type="InterPro" id="IPR013721">
    <property type="entry name" value="STAG"/>
</dbReference>
<dbReference type="PANTHER" id="PTHR11199:SF3">
    <property type="entry name" value="COHESIN SUBUNIT SA-2"/>
    <property type="match status" value="1"/>
</dbReference>
<dbReference type="PANTHER" id="PTHR11199">
    <property type="entry name" value="STROMAL ANTIGEN"/>
    <property type="match status" value="1"/>
</dbReference>
<dbReference type="Pfam" id="PF24571">
    <property type="entry name" value="HEAT_SCC3-SA"/>
    <property type="match status" value="1"/>
</dbReference>
<dbReference type="Pfam" id="PF21581">
    <property type="entry name" value="SCD"/>
    <property type="match status" value="1"/>
</dbReference>
<dbReference type="Pfam" id="PF08514">
    <property type="entry name" value="STAG"/>
    <property type="match status" value="1"/>
</dbReference>
<dbReference type="SUPFAM" id="SSF48371">
    <property type="entry name" value="ARM repeat"/>
    <property type="match status" value="1"/>
</dbReference>
<dbReference type="PROSITE" id="PS51425">
    <property type="entry name" value="SCD"/>
    <property type="match status" value="1"/>
</dbReference>
<organism>
    <name type="scientific">Xenopus laevis</name>
    <name type="common">African clawed frog</name>
    <dbReference type="NCBI Taxonomy" id="8355"/>
    <lineage>
        <taxon>Eukaryota</taxon>
        <taxon>Metazoa</taxon>
        <taxon>Chordata</taxon>
        <taxon>Craniata</taxon>
        <taxon>Vertebrata</taxon>
        <taxon>Euteleostomi</taxon>
        <taxon>Amphibia</taxon>
        <taxon>Batrachia</taxon>
        <taxon>Anura</taxon>
        <taxon>Pipoidea</taxon>
        <taxon>Pipidae</taxon>
        <taxon>Xenopodinae</taxon>
        <taxon>Xenopus</taxon>
        <taxon>Xenopus</taxon>
    </lineage>
</organism>
<protein>
    <recommendedName>
        <fullName>Cohesin subunit SA-2</fullName>
        <shortName>xSA-2</shortName>
    </recommendedName>
    <alternativeName>
        <fullName>SCC3 homolog 2</fullName>
    </alternativeName>
    <alternativeName>
        <fullName>Stromal antigen 2 homolog</fullName>
    </alternativeName>
</protein>
<sequence>MNGHHQQNGVENMMLFEVVKMGKSAMQSVVDDWIEAYKHSKDVALLDLINFFIQCSGCKGVVSGEMFRHMQNSEIIRRMTEEFDEDSGDYPLTMAGPQWKKFKFSFCEFIGVLVRQCQYSIIYDEYMMDTVISLLTGLSDSQVRAFRHTSTLAAMKLMTALVNVALNLSINMDNTQRQYEAERNKMIGKRANDRLELLLQKRKELQENQDEIENMMNAIFKGVFVHRYRDAIAEIRAICIEEIGVWMKMYSDAFLNDSYLKYVGWTMHDKQGEVRLKCLTALQGLYYNRELNTKLELFTSRFKDRIVSMTLDKEYDVAVQAIKLLTLVLQSSDEVLTAEDCENVYHLVYSAHRPVAVAAGEFLYKKLFSCRDPEEDGIMKRRGRLSPNANLVKTLVFFFLESELHEHAAYLVDSMWDCATELLKDWDCMNSLLLDDPLNGEEALTDRQESALIEILLCTVRQAAECHPPVGRGTGKRVLTAKEKKSQMDDKTHLTELFAVSLPQLLAKYSVDAEKVTNLLQLPQYFDLEIYTTGRLEKHLEALLRQIRNIVEKHTDTDVLEACSKTYHALCNEEFTIYNRVDIAKSQLIDELADKFNRLLEDFLQEEEELDEDDAYQVLSTLKRITAFHNAHDLSRWDLFSGNYKLLKTGIENGDMPEQIVVHALQCTHYVILWQLAKFSETGSSKEELITLKRQMRVFCQICQHYLTNVNTAVKEQAFTILCDVLMIFSHQIVVGGREALEPLVYSPDSSLQSELLSFILDHVFIDQDDDNSSSDGQQDDEASKIEALHKRRNLLAAFCKLIVYNVVEMNTAADIFKQYMRYYNDYGDIIKETMSKTRQIDKIQCAKTLILSLQQLFNEMIQEHSYNFDRSSPTFSAIKELARRFALTFGLDQLKTREAIAMLHKDGIEFAFKEPSPQGEAHPPLNMAFLDILSEFSSKLLRQDKKTVYAYLERFMTFQMSLRREDVWLPLMSYRNSLLAGGDDDTMSVMSGMSGRGSSTRSKKIKPPTGKRKLPEAEESSSSDSMWLNREQTMNTPVMLQTPQLTSTIMREPKRLRPEESYMPVYPMQPEHHQPSLDYNTQVTWMLAQRQQEEAARQQQERAAMNYVKLRSNLQHAIRRNTGLMEDDEEPIVEDVMMSSEGRIEDLNEGMDFDTMDIDLPPSKNRRERTELKPDFFDPASIMDESVLGVSMF</sequence>
<name>STAG2_XENLA</name>
<reference key="1">
    <citation type="journal article" date="2000" name="J. Cell Biol.">
        <title>Identification and characterization of SA/Scc3p subunits in the Xenopus and human cohesin complexes.</title>
        <authorList>
            <person name="Losada A."/>
            <person name="Yokochi T."/>
            <person name="Kobayashi R."/>
            <person name="Hirano T."/>
        </authorList>
    </citation>
    <scope>NUCLEOTIDE SEQUENCE [MRNA]</scope>
    <scope>IDENTIFICATION IN A COHESIN COMPLEX WITH SMC1; SMC3 AND RAD21</scope>
    <source>
        <tissue>Egg</tissue>
    </source>
</reference>
<reference key="2">
    <citation type="journal article" date="2002" name="Mol. Cell">
        <title>The dissociation of cohesin from chromosomes in prophase is regulated by Polo-like kinase.</title>
        <authorList>
            <person name="Sumara I."/>
            <person name="Vorlaufer E."/>
            <person name="Stukenberg P.T."/>
            <person name="Kelm O."/>
            <person name="Redemann N."/>
            <person name="Nigg E.A."/>
            <person name="Peters J.-M."/>
        </authorList>
    </citation>
    <scope>PHOSPHORYLATION BY PLK1</scope>
</reference>